<evidence type="ECO:0000255" key="1">
    <source>
        <dbReference type="HAMAP-Rule" id="MF_00108"/>
    </source>
</evidence>
<keyword id="KW-0414">Isoprene biosynthesis</keyword>
<keyword id="KW-0548">Nucleotidyltransferase</keyword>
<keyword id="KW-0808">Transferase</keyword>
<accession>B1HNM7</accession>
<comment type="function">
    <text evidence="1">Catalyzes the formation of 4-diphosphocytidyl-2-C-methyl-D-erythritol from CTP and 2-C-methyl-D-erythritol 4-phosphate (MEP).</text>
</comment>
<comment type="catalytic activity">
    <reaction evidence="1">
        <text>2-C-methyl-D-erythritol 4-phosphate + CTP + H(+) = 4-CDP-2-C-methyl-D-erythritol + diphosphate</text>
        <dbReference type="Rhea" id="RHEA:13429"/>
        <dbReference type="ChEBI" id="CHEBI:15378"/>
        <dbReference type="ChEBI" id="CHEBI:33019"/>
        <dbReference type="ChEBI" id="CHEBI:37563"/>
        <dbReference type="ChEBI" id="CHEBI:57823"/>
        <dbReference type="ChEBI" id="CHEBI:58262"/>
        <dbReference type="EC" id="2.7.7.60"/>
    </reaction>
</comment>
<comment type="pathway">
    <text evidence="1">Isoprenoid biosynthesis; isopentenyl diphosphate biosynthesis via DXP pathway; isopentenyl diphosphate from 1-deoxy-D-xylulose 5-phosphate: step 2/6.</text>
</comment>
<comment type="similarity">
    <text evidence="1">Belongs to the IspD/TarI cytidylyltransferase family. IspD subfamily.</text>
</comment>
<dbReference type="EC" id="2.7.7.60" evidence="1"/>
<dbReference type="EMBL" id="CP000817">
    <property type="protein sequence ID" value="ACA42090.1"/>
    <property type="molecule type" value="Genomic_DNA"/>
</dbReference>
<dbReference type="RefSeq" id="WP_012296091.1">
    <property type="nucleotide sequence ID" value="NC_010382.1"/>
</dbReference>
<dbReference type="SMR" id="B1HNM7"/>
<dbReference type="EnsemblBacteria" id="ACA42090">
    <property type="protein sequence ID" value="ACA42090"/>
    <property type="gene ID" value="Bsph_4646"/>
</dbReference>
<dbReference type="KEGG" id="lsp:Bsph_4646"/>
<dbReference type="HOGENOM" id="CLU_061281_2_2_9"/>
<dbReference type="UniPathway" id="UPA00056">
    <property type="reaction ID" value="UER00093"/>
</dbReference>
<dbReference type="Proteomes" id="UP000002164">
    <property type="component" value="Chromosome"/>
</dbReference>
<dbReference type="GO" id="GO:0050518">
    <property type="term" value="F:2-C-methyl-D-erythritol 4-phosphate cytidylyltransferase activity"/>
    <property type="evidence" value="ECO:0007669"/>
    <property type="project" value="UniProtKB-UniRule"/>
</dbReference>
<dbReference type="GO" id="GO:0019288">
    <property type="term" value="P:isopentenyl diphosphate biosynthetic process, methylerythritol 4-phosphate pathway"/>
    <property type="evidence" value="ECO:0007669"/>
    <property type="project" value="UniProtKB-UniRule"/>
</dbReference>
<dbReference type="CDD" id="cd02516">
    <property type="entry name" value="CDP-ME_synthetase"/>
    <property type="match status" value="1"/>
</dbReference>
<dbReference type="FunFam" id="3.90.550.10:FF:000003">
    <property type="entry name" value="2-C-methyl-D-erythritol 4-phosphate cytidylyltransferase"/>
    <property type="match status" value="1"/>
</dbReference>
<dbReference type="Gene3D" id="3.90.550.10">
    <property type="entry name" value="Spore Coat Polysaccharide Biosynthesis Protein SpsA, Chain A"/>
    <property type="match status" value="1"/>
</dbReference>
<dbReference type="HAMAP" id="MF_00108">
    <property type="entry name" value="IspD"/>
    <property type="match status" value="1"/>
</dbReference>
<dbReference type="InterPro" id="IPR001228">
    <property type="entry name" value="IspD"/>
</dbReference>
<dbReference type="InterPro" id="IPR034683">
    <property type="entry name" value="IspD/TarI"/>
</dbReference>
<dbReference type="InterPro" id="IPR050088">
    <property type="entry name" value="IspD/TarI_cytidylyltransf_bact"/>
</dbReference>
<dbReference type="InterPro" id="IPR018294">
    <property type="entry name" value="ISPD_synthase_CS"/>
</dbReference>
<dbReference type="InterPro" id="IPR029044">
    <property type="entry name" value="Nucleotide-diphossugar_trans"/>
</dbReference>
<dbReference type="NCBIfam" id="TIGR00453">
    <property type="entry name" value="ispD"/>
    <property type="match status" value="1"/>
</dbReference>
<dbReference type="PANTHER" id="PTHR32125">
    <property type="entry name" value="2-C-METHYL-D-ERYTHRITOL 4-PHOSPHATE CYTIDYLYLTRANSFERASE, CHLOROPLASTIC"/>
    <property type="match status" value="1"/>
</dbReference>
<dbReference type="PANTHER" id="PTHR32125:SF4">
    <property type="entry name" value="2-C-METHYL-D-ERYTHRITOL 4-PHOSPHATE CYTIDYLYLTRANSFERASE, CHLOROPLASTIC"/>
    <property type="match status" value="1"/>
</dbReference>
<dbReference type="Pfam" id="PF01128">
    <property type="entry name" value="IspD"/>
    <property type="match status" value="1"/>
</dbReference>
<dbReference type="SUPFAM" id="SSF53448">
    <property type="entry name" value="Nucleotide-diphospho-sugar transferases"/>
    <property type="match status" value="1"/>
</dbReference>
<dbReference type="PROSITE" id="PS01295">
    <property type="entry name" value="ISPD"/>
    <property type="match status" value="1"/>
</dbReference>
<gene>
    <name evidence="1" type="primary">ispD</name>
    <name type="ordered locus">Bsph_4646</name>
</gene>
<protein>
    <recommendedName>
        <fullName evidence="1">2-C-methyl-D-erythritol 4-phosphate cytidylyltransferase</fullName>
        <ecNumber evidence="1">2.7.7.60</ecNumber>
    </recommendedName>
    <alternativeName>
        <fullName evidence="1">4-diphosphocytidyl-2C-methyl-D-erythritol synthase</fullName>
    </alternativeName>
    <alternativeName>
        <fullName evidence="1">MEP cytidylyltransferase</fullName>
        <shortName evidence="1">MCT</shortName>
    </alternativeName>
</protein>
<sequence>MQYEVVLPAAGSGKRMGAGQNKLFLKLLKKPILIHTLEVFQQDPFCTGIWLAVKPEERIYIQELLDEYRITKVKGLPNGGAERQHSVHSCMKEMEQVDIVLVHDAARPFITHAIIANLVQSAHDFGAAIAGVRAKDTMKKVRNGVIEETVDRDSLWMIQTPQAFRFDLIVEAEDVAEKVGFLGTDEAMLVERLGHTVHIVESSYENVKMTTQEDLLFGEAILRKRALQLNE</sequence>
<name>ISPD_LYSSC</name>
<reference key="1">
    <citation type="journal article" date="2008" name="J. Bacteriol.">
        <title>Complete genome sequence of the mosquitocidal bacterium Bacillus sphaericus C3-41 and comparison with those of closely related Bacillus species.</title>
        <authorList>
            <person name="Hu X."/>
            <person name="Fan W."/>
            <person name="Han B."/>
            <person name="Liu H."/>
            <person name="Zheng D."/>
            <person name="Li Q."/>
            <person name="Dong W."/>
            <person name="Yan J."/>
            <person name="Gao M."/>
            <person name="Berry C."/>
            <person name="Yuan Z."/>
        </authorList>
    </citation>
    <scope>NUCLEOTIDE SEQUENCE [LARGE SCALE GENOMIC DNA]</scope>
    <source>
        <strain>C3-41</strain>
    </source>
</reference>
<proteinExistence type="inferred from homology"/>
<feature type="chain" id="PRO_1000094332" description="2-C-methyl-D-erythritol 4-phosphate cytidylyltransferase">
    <location>
        <begin position="1"/>
        <end position="231"/>
    </location>
</feature>
<feature type="site" description="Transition state stabilizer" evidence="1">
    <location>
        <position position="15"/>
    </location>
</feature>
<feature type="site" description="Transition state stabilizer" evidence="1">
    <location>
        <position position="22"/>
    </location>
</feature>
<feature type="site" description="Positions MEP for the nucleophilic attack" evidence="1">
    <location>
        <position position="152"/>
    </location>
</feature>
<feature type="site" description="Positions MEP for the nucleophilic attack" evidence="1">
    <location>
        <position position="208"/>
    </location>
</feature>
<organism>
    <name type="scientific">Lysinibacillus sphaericus (strain C3-41)</name>
    <dbReference type="NCBI Taxonomy" id="444177"/>
    <lineage>
        <taxon>Bacteria</taxon>
        <taxon>Bacillati</taxon>
        <taxon>Bacillota</taxon>
        <taxon>Bacilli</taxon>
        <taxon>Bacillales</taxon>
        <taxon>Bacillaceae</taxon>
        <taxon>Lysinibacillus</taxon>
    </lineage>
</organism>